<proteinExistence type="inferred from homology"/>
<protein>
    <recommendedName>
        <fullName evidence="1">4-hydroxy-3-methylbut-2-en-1-yl diphosphate synthase (ferredoxin)</fullName>
        <ecNumber evidence="1">1.17.7.1</ecNumber>
    </recommendedName>
    <alternativeName>
        <fullName evidence="1">1-hydroxy-2-methyl-2-(E)-butenyl 4-diphosphate synthase</fullName>
    </alternativeName>
</protein>
<dbReference type="EC" id="1.17.7.1" evidence="1"/>
<dbReference type="EMBL" id="BX569692">
    <property type="protein sequence ID" value="CAE07689.1"/>
    <property type="molecule type" value="Genomic_DNA"/>
</dbReference>
<dbReference type="RefSeq" id="WP_011128039.1">
    <property type="nucleotide sequence ID" value="NC_005070.1"/>
</dbReference>
<dbReference type="SMR" id="Q7U712"/>
<dbReference type="STRING" id="84588.SYNW1174"/>
<dbReference type="KEGG" id="syw:SYNW1174"/>
<dbReference type="eggNOG" id="COG0821">
    <property type="taxonomic scope" value="Bacteria"/>
</dbReference>
<dbReference type="HOGENOM" id="CLU_042258_0_0_3"/>
<dbReference type="UniPathway" id="UPA00056">
    <property type="reaction ID" value="UER00096"/>
</dbReference>
<dbReference type="Proteomes" id="UP000001422">
    <property type="component" value="Chromosome"/>
</dbReference>
<dbReference type="GO" id="GO:0051539">
    <property type="term" value="F:4 iron, 4 sulfur cluster binding"/>
    <property type="evidence" value="ECO:0007669"/>
    <property type="project" value="UniProtKB-UniRule"/>
</dbReference>
<dbReference type="GO" id="GO:0046429">
    <property type="term" value="F:4-hydroxy-3-methylbut-2-en-1-yl diphosphate synthase activity (ferredoxin)"/>
    <property type="evidence" value="ECO:0007669"/>
    <property type="project" value="UniProtKB-UniRule"/>
</dbReference>
<dbReference type="GO" id="GO:0005506">
    <property type="term" value="F:iron ion binding"/>
    <property type="evidence" value="ECO:0007669"/>
    <property type="project" value="InterPro"/>
</dbReference>
<dbReference type="GO" id="GO:0019288">
    <property type="term" value="P:isopentenyl diphosphate biosynthetic process, methylerythritol 4-phosphate pathway"/>
    <property type="evidence" value="ECO:0007669"/>
    <property type="project" value="UniProtKB-UniRule"/>
</dbReference>
<dbReference type="GO" id="GO:0016114">
    <property type="term" value="P:terpenoid biosynthetic process"/>
    <property type="evidence" value="ECO:0007669"/>
    <property type="project" value="InterPro"/>
</dbReference>
<dbReference type="FunFam" id="3.20.20.20:FF:000005">
    <property type="entry name" value="4-hydroxy-3-methylbut-2-en-1-yl diphosphate synthase (flavodoxin)"/>
    <property type="match status" value="1"/>
</dbReference>
<dbReference type="FunFam" id="3.30.413.10:FF:000006">
    <property type="entry name" value="4-hydroxy-3-methylbut-2-en-1-yl diphosphate synthase (flavodoxin)"/>
    <property type="match status" value="1"/>
</dbReference>
<dbReference type="Gene3D" id="3.20.20.20">
    <property type="entry name" value="Dihydropteroate synthase-like"/>
    <property type="match status" value="1"/>
</dbReference>
<dbReference type="Gene3D" id="3.30.413.10">
    <property type="entry name" value="Sulfite Reductase Hemoprotein, domain 1"/>
    <property type="match status" value="1"/>
</dbReference>
<dbReference type="HAMAP" id="MF_00159">
    <property type="entry name" value="IspG"/>
    <property type="match status" value="1"/>
</dbReference>
<dbReference type="InterPro" id="IPR011005">
    <property type="entry name" value="Dihydropteroate_synth-like_sf"/>
</dbReference>
<dbReference type="InterPro" id="IPR016425">
    <property type="entry name" value="IspG_bac"/>
</dbReference>
<dbReference type="InterPro" id="IPR004588">
    <property type="entry name" value="IspG_bac-typ"/>
</dbReference>
<dbReference type="InterPro" id="IPR045854">
    <property type="entry name" value="NO2/SO3_Rdtase_4Fe4S_sf"/>
</dbReference>
<dbReference type="NCBIfam" id="TIGR00612">
    <property type="entry name" value="ispG_gcpE"/>
    <property type="match status" value="1"/>
</dbReference>
<dbReference type="NCBIfam" id="NF001540">
    <property type="entry name" value="PRK00366.1"/>
    <property type="match status" value="1"/>
</dbReference>
<dbReference type="PANTHER" id="PTHR30454">
    <property type="entry name" value="4-HYDROXY-3-METHYLBUT-2-EN-1-YL DIPHOSPHATE SYNTHASE"/>
    <property type="match status" value="1"/>
</dbReference>
<dbReference type="PANTHER" id="PTHR30454:SF0">
    <property type="entry name" value="4-HYDROXY-3-METHYLBUT-2-EN-1-YL DIPHOSPHATE SYNTHASE (FERREDOXIN), CHLOROPLASTIC"/>
    <property type="match status" value="1"/>
</dbReference>
<dbReference type="Pfam" id="PF04551">
    <property type="entry name" value="GcpE"/>
    <property type="match status" value="1"/>
</dbReference>
<dbReference type="PIRSF" id="PIRSF004640">
    <property type="entry name" value="IspG"/>
    <property type="match status" value="1"/>
</dbReference>
<dbReference type="SUPFAM" id="SSF56014">
    <property type="entry name" value="Nitrite and sulphite reductase 4Fe-4S domain-like"/>
    <property type="match status" value="1"/>
</dbReference>
<comment type="function">
    <text evidence="1">Converts 2C-methyl-D-erythritol 2,4-cyclodiphosphate (ME-2,4cPP) into 1-hydroxy-2-methyl-2-(E)-butenyl 4-diphosphate.</text>
</comment>
<comment type="catalytic activity">
    <reaction evidence="1">
        <text>(2E)-4-hydroxy-3-methylbut-2-enyl diphosphate + 2 oxidized [2Fe-2S]-[ferredoxin] + H2O = 2-C-methyl-D-erythritol 2,4-cyclic diphosphate + 2 reduced [2Fe-2S]-[ferredoxin] + H(+)</text>
        <dbReference type="Rhea" id="RHEA:26119"/>
        <dbReference type="Rhea" id="RHEA-COMP:10000"/>
        <dbReference type="Rhea" id="RHEA-COMP:10001"/>
        <dbReference type="ChEBI" id="CHEBI:15377"/>
        <dbReference type="ChEBI" id="CHEBI:15378"/>
        <dbReference type="ChEBI" id="CHEBI:33737"/>
        <dbReference type="ChEBI" id="CHEBI:33738"/>
        <dbReference type="ChEBI" id="CHEBI:58483"/>
        <dbReference type="ChEBI" id="CHEBI:128753"/>
        <dbReference type="EC" id="1.17.7.1"/>
    </reaction>
</comment>
<comment type="cofactor">
    <cofactor evidence="1">
        <name>[4Fe-4S] cluster</name>
        <dbReference type="ChEBI" id="CHEBI:49883"/>
    </cofactor>
    <text evidence="1">Binds 1 [4Fe-4S] cluster.</text>
</comment>
<comment type="pathway">
    <text evidence="1">Isoprenoid biosynthesis; isopentenyl diphosphate biosynthesis via DXP pathway; isopentenyl diphosphate from 1-deoxy-D-xylulose 5-phosphate: step 5/6.</text>
</comment>
<comment type="similarity">
    <text evidence="1">Belongs to the IspG family.</text>
</comment>
<feature type="chain" id="PRO_0000190640" description="4-hydroxy-3-methylbut-2-en-1-yl diphosphate synthase (ferredoxin)">
    <location>
        <begin position="1"/>
        <end position="398"/>
    </location>
</feature>
<feature type="binding site" evidence="1">
    <location>
        <position position="306"/>
    </location>
    <ligand>
        <name>[4Fe-4S] cluster</name>
        <dbReference type="ChEBI" id="CHEBI:49883"/>
    </ligand>
</feature>
<feature type="binding site" evidence="1">
    <location>
        <position position="309"/>
    </location>
    <ligand>
        <name>[4Fe-4S] cluster</name>
        <dbReference type="ChEBI" id="CHEBI:49883"/>
    </ligand>
</feature>
<feature type="binding site" evidence="1">
    <location>
        <position position="340"/>
    </location>
    <ligand>
        <name>[4Fe-4S] cluster</name>
        <dbReference type="ChEBI" id="CHEBI:49883"/>
    </ligand>
</feature>
<feature type="binding site" evidence="1">
    <location>
        <position position="347"/>
    </location>
    <ligand>
        <name>[4Fe-4S] cluster</name>
        <dbReference type="ChEBI" id="CHEBI:49883"/>
    </ligand>
</feature>
<sequence>MTALDRRYDTQIHRRITRTVMVGDVAIGSDHPVVVQSMINEDTLDIDAAVAGIVRLAEAGSEIVRVTTPSMAHARAMGEIRAAVRARGCTVPLVADVHHNGVKIAMEVAQHVDKVRINPGLFVFDKPDPNRQEFSDKEFAAIGARIHETFEPLVTLLRDQNKALRIGVNHGSLAERMLFTYGDTPKGMVESAMEFVRICDELDFHNIVISMKASRAPVMLAAYRLMADTMDKEGFNYPLHLGVTEAGDGDYGRVKSTAGIATLLADGLGDTIRVSLTEAPEREIPVCYSILQSLGLRKTMVEYVACPSCGRTLFNLEEVLHKVRDATSHLTGLDIAVMGCIVNGPGEMADADYGYVGKTPGVISLYRGRDEIRKVPEEEGVNALIQLIKEDGRWVEPA</sequence>
<gene>
    <name evidence="1" type="primary">ispG</name>
    <name type="synonym">gcpE</name>
    <name type="ordered locus">SYNW1174</name>
</gene>
<evidence type="ECO:0000255" key="1">
    <source>
        <dbReference type="HAMAP-Rule" id="MF_00159"/>
    </source>
</evidence>
<name>ISPG_PARMW</name>
<organism>
    <name type="scientific">Parasynechococcus marenigrum (strain WH8102)</name>
    <dbReference type="NCBI Taxonomy" id="84588"/>
    <lineage>
        <taxon>Bacteria</taxon>
        <taxon>Bacillati</taxon>
        <taxon>Cyanobacteriota</taxon>
        <taxon>Cyanophyceae</taxon>
        <taxon>Synechococcales</taxon>
        <taxon>Prochlorococcaceae</taxon>
        <taxon>Parasynechococcus</taxon>
        <taxon>Parasynechococcus marenigrum</taxon>
    </lineage>
</organism>
<keyword id="KW-0004">4Fe-4S</keyword>
<keyword id="KW-0408">Iron</keyword>
<keyword id="KW-0411">Iron-sulfur</keyword>
<keyword id="KW-0414">Isoprene biosynthesis</keyword>
<keyword id="KW-0479">Metal-binding</keyword>
<keyword id="KW-0560">Oxidoreductase</keyword>
<reference key="1">
    <citation type="journal article" date="2003" name="Nature">
        <title>The genome of a motile marine Synechococcus.</title>
        <authorList>
            <person name="Palenik B."/>
            <person name="Brahamsha B."/>
            <person name="Larimer F.W."/>
            <person name="Land M.L."/>
            <person name="Hauser L."/>
            <person name="Chain P."/>
            <person name="Lamerdin J.E."/>
            <person name="Regala W."/>
            <person name="Allen E.E."/>
            <person name="McCarren J."/>
            <person name="Paulsen I.T."/>
            <person name="Dufresne A."/>
            <person name="Partensky F."/>
            <person name="Webb E.A."/>
            <person name="Waterbury J."/>
        </authorList>
    </citation>
    <scope>NUCLEOTIDE SEQUENCE [LARGE SCALE GENOMIC DNA]</scope>
    <source>
        <strain>WH8102</strain>
    </source>
</reference>
<accession>Q7U712</accession>